<keyword id="KW-0472">Membrane</keyword>
<keyword id="KW-0496">Mitochondrion</keyword>
<keyword id="KW-0999">Mitochondrion inner membrane</keyword>
<keyword id="KW-1278">Translocase</keyword>
<keyword id="KW-0812">Transmembrane</keyword>
<keyword id="KW-1133">Transmembrane helix</keyword>
<gene>
    <name type="primary">MT-CO3</name>
    <name type="synonym">COIII</name>
    <name type="synonym">COXIII</name>
    <name type="synonym">MTCO3</name>
</gene>
<accession>O47700</accession>
<protein>
    <recommendedName>
        <fullName>Cytochrome c oxidase subunit 3</fullName>
        <ecNumber>7.1.1.9</ecNumber>
    </recommendedName>
    <alternativeName>
        <fullName>Cytochrome c oxidase polypeptide III</fullName>
    </alternativeName>
</protein>
<geneLocation type="mitochondrion"/>
<sequence>MTHQTHAYHMVNPSPWPLTGALSALLMTSGLIMWFHFNSTTLLMLGLTTNMLTMYQWWRDIIRESTFQGHHTPNVQKGLRYGMILFIISEVLFFTGFFWAFYHSSLAPTPELGGCWPPTGIHPLNPLEVPLLNTSVLLASGVSITWAHHSLMEGNRNHMLQALFITIALGVYFTLLQASEYYEAPFTISDGVYGSTFFVATGFHGLHVIIGSTFLIVCFFRQLKFHFTSSHHFGFEAAAWYWHFVDVVWLFLYVSIYWWGS</sequence>
<comment type="function">
    <text evidence="2">Component of the cytochrome c oxidase, the last enzyme in the mitochondrial electron transport chain which drives oxidative phosphorylation. The respiratory chain contains 3 multisubunit complexes succinate dehydrogenase (complex II, CII), ubiquinol-cytochrome c oxidoreductase (cytochrome b-c1 complex, complex III, CIII) and cytochrome c oxidase (complex IV, CIV), that cooperate to transfer electrons derived from NADH and succinate to molecular oxygen, creating an electrochemical gradient over the inner membrane that drives transmembrane transport and the ATP synthase. Cytochrome c oxidase is the component of the respiratory chain that catalyzes the reduction of oxygen to water. Electrons originating from reduced cytochrome c in the intermembrane space (IMS) are transferred via the dinuclear copper A center (CU(A)) of subunit 2 and heme A of subunit 1 to the active site in subunit 1, a binuclear center (BNC) formed by heme A3 and copper B (CU(B)). The BNC reduces molecular oxygen to 2 water molecules using 4 electrons from cytochrome c in the IMS and 4 protons from the mitochondrial matrix.</text>
</comment>
<comment type="catalytic activity">
    <reaction evidence="2">
        <text>4 Fe(II)-[cytochrome c] + O2 + 8 H(+)(in) = 4 Fe(III)-[cytochrome c] + 2 H2O + 4 H(+)(out)</text>
        <dbReference type="Rhea" id="RHEA:11436"/>
        <dbReference type="Rhea" id="RHEA-COMP:10350"/>
        <dbReference type="Rhea" id="RHEA-COMP:14399"/>
        <dbReference type="ChEBI" id="CHEBI:15377"/>
        <dbReference type="ChEBI" id="CHEBI:15378"/>
        <dbReference type="ChEBI" id="CHEBI:15379"/>
        <dbReference type="ChEBI" id="CHEBI:29033"/>
        <dbReference type="ChEBI" id="CHEBI:29034"/>
        <dbReference type="EC" id="7.1.1.9"/>
    </reaction>
    <physiologicalReaction direction="left-to-right" evidence="2">
        <dbReference type="Rhea" id="RHEA:11437"/>
    </physiologicalReaction>
</comment>
<comment type="subunit">
    <text evidence="1">Component of the cytochrome c oxidase (complex IV, CIV), a multisubunit enzyme composed of 14 subunits. The complex is composed of a catalytic core of 3 subunits MT-CO1, MT-CO2 and MT-CO3, encoded in the mitochondrial DNA, and 11 supernumerary subunits COX4I, COX5A, COX5B, COX6A, COX6B, COX6C, COX7A, COX7B, COX7C, COX8 and NDUFA4, which are encoded in the nuclear genome. The complex exists as a monomer or a dimer and forms supercomplexes (SCs) in the inner mitochondrial membrane with NADH-ubiquinone oxidoreductase (complex I, CI) and ubiquinol-cytochrome c oxidoreductase (cytochrome b-c1 complex, complex III, CIII), resulting in different assemblies (supercomplex SCI(1)III(2)IV(1) and megacomplex MCI(2)III(2)IV(2)).</text>
</comment>
<comment type="subcellular location">
    <subcellularLocation>
        <location evidence="1">Mitochondrion inner membrane</location>
        <topology evidence="1">Multi-pass membrane protein</topology>
    </subcellularLocation>
</comment>
<comment type="similarity">
    <text evidence="3">Belongs to the cytochrome c oxidase subunit 3 family.</text>
</comment>
<dbReference type="EC" id="7.1.1.9"/>
<dbReference type="EMBL" id="AF030465">
    <property type="protein sequence ID" value="AAB93604.1"/>
    <property type="molecule type" value="Genomic_DNA"/>
</dbReference>
<dbReference type="SMR" id="O47700"/>
<dbReference type="GO" id="GO:0005743">
    <property type="term" value="C:mitochondrial inner membrane"/>
    <property type="evidence" value="ECO:0007669"/>
    <property type="project" value="UniProtKB-SubCell"/>
</dbReference>
<dbReference type="GO" id="GO:0045277">
    <property type="term" value="C:respiratory chain complex IV"/>
    <property type="evidence" value="ECO:0000250"/>
    <property type="project" value="UniProtKB"/>
</dbReference>
<dbReference type="GO" id="GO:0004129">
    <property type="term" value="F:cytochrome-c oxidase activity"/>
    <property type="evidence" value="ECO:0007669"/>
    <property type="project" value="UniProtKB-EC"/>
</dbReference>
<dbReference type="GO" id="GO:0006123">
    <property type="term" value="P:mitochondrial electron transport, cytochrome c to oxygen"/>
    <property type="evidence" value="ECO:0007669"/>
    <property type="project" value="TreeGrafter"/>
</dbReference>
<dbReference type="GO" id="GO:0008535">
    <property type="term" value="P:respiratory chain complex IV assembly"/>
    <property type="evidence" value="ECO:0000250"/>
    <property type="project" value="UniProtKB"/>
</dbReference>
<dbReference type="CDD" id="cd01665">
    <property type="entry name" value="Cyt_c_Oxidase_III"/>
    <property type="match status" value="1"/>
</dbReference>
<dbReference type="FunFam" id="1.10.287.70:FF:000048">
    <property type="entry name" value="Cytochrome c oxidase subunit 3"/>
    <property type="match status" value="1"/>
</dbReference>
<dbReference type="FunFam" id="1.20.120.80:FF:000002">
    <property type="entry name" value="Cytochrome c oxidase subunit 3"/>
    <property type="match status" value="1"/>
</dbReference>
<dbReference type="Gene3D" id="1.10.287.70">
    <property type="match status" value="1"/>
</dbReference>
<dbReference type="Gene3D" id="1.20.120.80">
    <property type="entry name" value="Cytochrome c oxidase, subunit III, four-helix bundle"/>
    <property type="match status" value="1"/>
</dbReference>
<dbReference type="InterPro" id="IPR024791">
    <property type="entry name" value="Cyt_c/ubiquinol_Oxase_su3"/>
</dbReference>
<dbReference type="InterPro" id="IPR033945">
    <property type="entry name" value="Cyt_c_oxase_su3_dom"/>
</dbReference>
<dbReference type="InterPro" id="IPR000298">
    <property type="entry name" value="Cyt_c_oxidase-like_su3"/>
</dbReference>
<dbReference type="InterPro" id="IPR035973">
    <property type="entry name" value="Cyt_c_oxidase_su3-like_sf"/>
</dbReference>
<dbReference type="InterPro" id="IPR013833">
    <property type="entry name" value="Cyt_c_oxidase_su3_a-hlx"/>
</dbReference>
<dbReference type="PANTHER" id="PTHR11403:SF7">
    <property type="entry name" value="CYTOCHROME C OXIDASE SUBUNIT 3"/>
    <property type="match status" value="1"/>
</dbReference>
<dbReference type="PANTHER" id="PTHR11403">
    <property type="entry name" value="CYTOCHROME C OXIDASE SUBUNIT III"/>
    <property type="match status" value="1"/>
</dbReference>
<dbReference type="Pfam" id="PF00510">
    <property type="entry name" value="COX3"/>
    <property type="match status" value="1"/>
</dbReference>
<dbReference type="SUPFAM" id="SSF81452">
    <property type="entry name" value="Cytochrome c oxidase subunit III-like"/>
    <property type="match status" value="1"/>
</dbReference>
<dbReference type="PROSITE" id="PS50253">
    <property type="entry name" value="COX3"/>
    <property type="match status" value="1"/>
</dbReference>
<reference key="1">
    <citation type="journal article" date="1999" name="Mol. Phylogenet. Evol.">
        <title>Phylogenetic relationships in the bovid subfamily Antilopinae based on mitochondrial DNA sequences.</title>
        <authorList>
            <person name="Rebholz W.E.R."/>
            <person name="Harley E.H."/>
        </authorList>
    </citation>
    <scope>NUCLEOTIDE SEQUENCE [GENOMIC DNA]</scope>
</reference>
<organism>
    <name type="scientific">Litocranius walleri</name>
    <name type="common">Gerenuk</name>
    <dbReference type="NCBI Taxonomy" id="69311"/>
    <lineage>
        <taxon>Eukaryota</taxon>
        <taxon>Metazoa</taxon>
        <taxon>Chordata</taxon>
        <taxon>Craniata</taxon>
        <taxon>Vertebrata</taxon>
        <taxon>Euteleostomi</taxon>
        <taxon>Mammalia</taxon>
        <taxon>Eutheria</taxon>
        <taxon>Laurasiatheria</taxon>
        <taxon>Artiodactyla</taxon>
        <taxon>Ruminantia</taxon>
        <taxon>Pecora</taxon>
        <taxon>Bovidae</taxon>
        <taxon>Antilopinae</taxon>
        <taxon>Litocranius</taxon>
    </lineage>
</organism>
<name>COX3_LITWA</name>
<feature type="chain" id="PRO_0000183799" description="Cytochrome c oxidase subunit 3">
    <location>
        <begin position="1"/>
        <end position="261"/>
    </location>
</feature>
<feature type="topological domain" description="Mitochondrial matrix" evidence="1">
    <location>
        <begin position="1"/>
        <end position="15"/>
    </location>
</feature>
<feature type="transmembrane region" description="Helical; Name=I" evidence="1">
    <location>
        <begin position="16"/>
        <end position="34"/>
    </location>
</feature>
<feature type="topological domain" description="Mitochondrial intermembrane" evidence="1">
    <location>
        <begin position="35"/>
        <end position="40"/>
    </location>
</feature>
<feature type="transmembrane region" description="Helical; Name=II" evidence="1">
    <location>
        <begin position="41"/>
        <end position="66"/>
    </location>
</feature>
<feature type="topological domain" description="Mitochondrial matrix" evidence="1">
    <location>
        <begin position="67"/>
        <end position="72"/>
    </location>
</feature>
<feature type="transmembrane region" description="Helical; Name=III" evidence="1">
    <location>
        <begin position="73"/>
        <end position="105"/>
    </location>
</feature>
<feature type="topological domain" description="Mitochondrial intermembrane" evidence="1">
    <location>
        <begin position="106"/>
        <end position="128"/>
    </location>
</feature>
<feature type="transmembrane region" description="Helical; Name=IV" evidence="1">
    <location>
        <begin position="129"/>
        <end position="152"/>
    </location>
</feature>
<feature type="topological domain" description="Mitochondrial matrix" evidence="1">
    <location>
        <begin position="153"/>
        <end position="155"/>
    </location>
</feature>
<feature type="transmembrane region" description="Helical; Name=V" evidence="1">
    <location>
        <begin position="156"/>
        <end position="183"/>
    </location>
</feature>
<feature type="topological domain" description="Mitochondrial intermembrane" evidence="1">
    <location>
        <begin position="184"/>
        <end position="190"/>
    </location>
</feature>
<feature type="transmembrane region" description="Helical; Name=VI" evidence="1">
    <location>
        <begin position="191"/>
        <end position="223"/>
    </location>
</feature>
<feature type="topological domain" description="Mitochondrial matrix" evidence="1">
    <location>
        <begin position="224"/>
        <end position="232"/>
    </location>
</feature>
<feature type="transmembrane region" description="Helical; Name=VII" evidence="1">
    <location>
        <begin position="233"/>
        <end position="256"/>
    </location>
</feature>
<feature type="topological domain" description="Mitochondrial intermembrane" evidence="1">
    <location>
        <begin position="257"/>
        <end position="261"/>
    </location>
</feature>
<proteinExistence type="inferred from homology"/>
<evidence type="ECO:0000250" key="1">
    <source>
        <dbReference type="UniProtKB" id="P00415"/>
    </source>
</evidence>
<evidence type="ECO:0000250" key="2">
    <source>
        <dbReference type="UniProtKB" id="P00420"/>
    </source>
</evidence>
<evidence type="ECO:0000305" key="3"/>